<gene>
    <name type="primary">RPS16</name>
</gene>
<feature type="chain" id="PRO_0000240303" description="Small ribosomal subunit protein uS9">
    <location>
        <begin position="1"/>
        <end position="146"/>
    </location>
</feature>
<feature type="modified residue" description="Phosphoserine" evidence="1">
    <location>
        <position position="3"/>
    </location>
</feature>
<feature type="modified residue" description="N6-acetyllysine" evidence="1">
    <location>
        <position position="60"/>
    </location>
</feature>
<protein>
    <recommendedName>
        <fullName evidence="2">Small ribosomal subunit protein uS9</fullName>
    </recommendedName>
    <alternativeName>
        <fullName>40S ribosomal protein S16</fullName>
    </alternativeName>
</protein>
<accession>Q3T0X6</accession>
<name>RS16_BOVIN</name>
<dbReference type="EMBL" id="BC102215">
    <property type="protein sequence ID" value="AAI02216.1"/>
    <property type="molecule type" value="mRNA"/>
</dbReference>
<dbReference type="RefSeq" id="NP_001028796.1">
    <property type="nucleotide sequence ID" value="NM_001033624.2"/>
</dbReference>
<dbReference type="PDB" id="6MTD">
    <property type="method" value="EM"/>
    <property type="resolution" value="3.30 A"/>
    <property type="chains" value="QQ=5-146"/>
</dbReference>
<dbReference type="PDB" id="6MTE">
    <property type="method" value="EM"/>
    <property type="resolution" value="3.40 A"/>
    <property type="chains" value="QQ=5-146"/>
</dbReference>
<dbReference type="PDBsum" id="6MTD"/>
<dbReference type="PDBsum" id="6MTE"/>
<dbReference type="EMDB" id="EMD-9240"/>
<dbReference type="EMDB" id="EMD-9242"/>
<dbReference type="SMR" id="Q3T0X6"/>
<dbReference type="FunCoup" id="Q3T0X6">
    <property type="interactions" value="1673"/>
</dbReference>
<dbReference type="STRING" id="9913.ENSBTAP00000052478"/>
<dbReference type="PaxDb" id="9913-ENSBTAP00000028093"/>
<dbReference type="PeptideAtlas" id="Q3T0X6"/>
<dbReference type="Ensembl" id="ENSBTAT00000028093.6">
    <property type="protein sequence ID" value="ENSBTAP00000028093.4"/>
    <property type="gene ID" value="ENSBTAG00000021093.6"/>
</dbReference>
<dbReference type="GeneID" id="506297"/>
<dbReference type="KEGG" id="bta:506297"/>
<dbReference type="CTD" id="6217"/>
<dbReference type="VEuPathDB" id="HostDB:ENSBTAG00000021093"/>
<dbReference type="eggNOG" id="KOG1753">
    <property type="taxonomic scope" value="Eukaryota"/>
</dbReference>
<dbReference type="GeneTree" id="ENSGT00390000013067"/>
<dbReference type="HOGENOM" id="CLU_046483_4_0_1"/>
<dbReference type="InParanoid" id="Q3T0X6"/>
<dbReference type="OMA" id="WPIEMAR"/>
<dbReference type="OrthoDB" id="426865at2759"/>
<dbReference type="TreeFam" id="TF300088"/>
<dbReference type="Reactome" id="R-BTA-156827">
    <property type="pathway name" value="L13a-mediated translational silencing of Ceruloplasmin expression"/>
</dbReference>
<dbReference type="Reactome" id="R-BTA-1799339">
    <property type="pathway name" value="SRP-dependent cotranslational protein targeting to membrane"/>
</dbReference>
<dbReference type="Reactome" id="R-BTA-6791226">
    <property type="pathway name" value="Major pathway of rRNA processing in the nucleolus and cytosol"/>
</dbReference>
<dbReference type="Reactome" id="R-BTA-72649">
    <property type="pathway name" value="Translation initiation complex formation"/>
</dbReference>
<dbReference type="Reactome" id="R-BTA-72689">
    <property type="pathway name" value="Formation of a pool of free 40S subunits"/>
</dbReference>
<dbReference type="Reactome" id="R-BTA-72695">
    <property type="pathway name" value="Formation of the ternary complex, and subsequently, the 43S complex"/>
</dbReference>
<dbReference type="Reactome" id="R-BTA-72702">
    <property type="pathway name" value="Ribosomal scanning and start codon recognition"/>
</dbReference>
<dbReference type="Reactome" id="R-BTA-72706">
    <property type="pathway name" value="GTP hydrolysis and joining of the 60S ribosomal subunit"/>
</dbReference>
<dbReference type="Reactome" id="R-BTA-975956">
    <property type="pathway name" value="Nonsense Mediated Decay (NMD) independent of the Exon Junction Complex (EJC)"/>
</dbReference>
<dbReference type="Reactome" id="R-BTA-975957">
    <property type="pathway name" value="Nonsense Mediated Decay (NMD) enhanced by the Exon Junction Complex (EJC)"/>
</dbReference>
<dbReference type="Proteomes" id="UP000009136">
    <property type="component" value="Chromosome 18"/>
</dbReference>
<dbReference type="Bgee" id="ENSBTAG00000021093">
    <property type="expression patterns" value="Expressed in theca cell and 106 other cell types or tissues"/>
</dbReference>
<dbReference type="GO" id="GO:0022627">
    <property type="term" value="C:cytosolic small ribosomal subunit"/>
    <property type="evidence" value="ECO:0000318"/>
    <property type="project" value="GO_Central"/>
</dbReference>
<dbReference type="GO" id="GO:0005730">
    <property type="term" value="C:nucleolus"/>
    <property type="evidence" value="ECO:0007669"/>
    <property type="project" value="UniProtKB-SubCell"/>
</dbReference>
<dbReference type="GO" id="GO:0032040">
    <property type="term" value="C:small-subunit processome"/>
    <property type="evidence" value="ECO:0000250"/>
    <property type="project" value="UniProtKB"/>
</dbReference>
<dbReference type="GO" id="GO:0003723">
    <property type="term" value="F:RNA binding"/>
    <property type="evidence" value="ECO:0000318"/>
    <property type="project" value="GO_Central"/>
</dbReference>
<dbReference type="GO" id="GO:0003735">
    <property type="term" value="F:structural constituent of ribosome"/>
    <property type="evidence" value="ECO:0000318"/>
    <property type="project" value="GO_Central"/>
</dbReference>
<dbReference type="GO" id="GO:0000462">
    <property type="term" value="P:maturation of SSU-rRNA from tricistronic rRNA transcript (SSU-rRNA, 5.8S rRNA, LSU-rRNA)"/>
    <property type="evidence" value="ECO:0000318"/>
    <property type="project" value="GO_Central"/>
</dbReference>
<dbReference type="GO" id="GO:0042274">
    <property type="term" value="P:ribosomal small subunit biogenesis"/>
    <property type="evidence" value="ECO:0000250"/>
    <property type="project" value="UniProtKB"/>
</dbReference>
<dbReference type="GO" id="GO:0006412">
    <property type="term" value="P:translation"/>
    <property type="evidence" value="ECO:0007669"/>
    <property type="project" value="InterPro"/>
</dbReference>
<dbReference type="FunFam" id="3.30.230.10:FF:000184">
    <property type="entry name" value="40S ribosomal protein S16"/>
    <property type="match status" value="1"/>
</dbReference>
<dbReference type="Gene3D" id="3.30.230.10">
    <property type="match status" value="1"/>
</dbReference>
<dbReference type="InterPro" id="IPR020568">
    <property type="entry name" value="Ribosomal_Su5_D2-typ_SF"/>
</dbReference>
<dbReference type="InterPro" id="IPR000754">
    <property type="entry name" value="Ribosomal_uS9"/>
</dbReference>
<dbReference type="InterPro" id="IPR020574">
    <property type="entry name" value="Ribosomal_uS9_CS"/>
</dbReference>
<dbReference type="InterPro" id="IPR014721">
    <property type="entry name" value="Ribsml_uS5_D2-typ_fold_subgr"/>
</dbReference>
<dbReference type="PANTHER" id="PTHR21569:SF16">
    <property type="entry name" value="RIBOSOMAL PROTEIN S16"/>
    <property type="match status" value="1"/>
</dbReference>
<dbReference type="PANTHER" id="PTHR21569">
    <property type="entry name" value="RIBOSOMAL PROTEIN S9"/>
    <property type="match status" value="1"/>
</dbReference>
<dbReference type="Pfam" id="PF00380">
    <property type="entry name" value="Ribosomal_S9"/>
    <property type="match status" value="1"/>
</dbReference>
<dbReference type="SUPFAM" id="SSF54211">
    <property type="entry name" value="Ribosomal protein S5 domain 2-like"/>
    <property type="match status" value="1"/>
</dbReference>
<dbReference type="PROSITE" id="PS00360">
    <property type="entry name" value="RIBOSOMAL_S9"/>
    <property type="match status" value="1"/>
</dbReference>
<proteinExistence type="evidence at protein level"/>
<organism>
    <name type="scientific">Bos taurus</name>
    <name type="common">Bovine</name>
    <dbReference type="NCBI Taxonomy" id="9913"/>
    <lineage>
        <taxon>Eukaryota</taxon>
        <taxon>Metazoa</taxon>
        <taxon>Chordata</taxon>
        <taxon>Craniata</taxon>
        <taxon>Vertebrata</taxon>
        <taxon>Euteleostomi</taxon>
        <taxon>Mammalia</taxon>
        <taxon>Eutheria</taxon>
        <taxon>Laurasiatheria</taxon>
        <taxon>Artiodactyla</taxon>
        <taxon>Ruminantia</taxon>
        <taxon>Pecora</taxon>
        <taxon>Bovidae</taxon>
        <taxon>Bovinae</taxon>
        <taxon>Bos</taxon>
    </lineage>
</organism>
<comment type="function">
    <text evidence="1">Component of the small ribosomal subunit. The ribosome is a large ribonucleoprotein complex responsible for the synthesis of proteins in the cell. Part of the small subunit (SSU) processome, first precursor of the small eukaryotic ribosomal subunit. During the assembly of the SSU processome in the nucleolus, many ribosome biogenesis factors, an RNA chaperone and ribosomal proteins associate with the nascent pre-rRNA and work in concert to generate RNA folding, modifications, rearrangements and cleavage as well as targeted degradation of pre-ribosomal RNA by the RNA exosome.</text>
</comment>
<comment type="subunit">
    <text evidence="1">Component of the small ribosomal subunit. Part of the small subunit (SSU) processome, composed of more than 70 proteins and the RNA chaperone small nucleolar RNA (snoRNA) U3.</text>
</comment>
<comment type="subcellular location">
    <subcellularLocation>
        <location evidence="1">Cytoplasm</location>
    </subcellularLocation>
    <subcellularLocation>
        <location evidence="1">Nucleus</location>
        <location evidence="1">Nucleolus</location>
    </subcellularLocation>
</comment>
<comment type="similarity">
    <text evidence="2">Belongs to the universal ribosomal protein uS9 family.</text>
</comment>
<reference key="1">
    <citation type="submission" date="2005-08" db="EMBL/GenBank/DDBJ databases">
        <authorList>
            <consortium name="NIH - Mammalian Gene Collection (MGC) project"/>
        </authorList>
    </citation>
    <scope>NUCLEOTIDE SEQUENCE [LARGE SCALE MRNA]</scope>
    <source>
        <strain>Crossbred X Angus</strain>
        <tissue>Ileum</tissue>
    </source>
</reference>
<keyword id="KW-0002">3D-structure</keyword>
<keyword id="KW-0007">Acetylation</keyword>
<keyword id="KW-0963">Cytoplasm</keyword>
<keyword id="KW-0539">Nucleus</keyword>
<keyword id="KW-0597">Phosphoprotein</keyword>
<keyword id="KW-1185">Reference proteome</keyword>
<keyword id="KW-0687">Ribonucleoprotein</keyword>
<keyword id="KW-0689">Ribosomal protein</keyword>
<evidence type="ECO:0000250" key="1">
    <source>
        <dbReference type="UniProtKB" id="P62249"/>
    </source>
</evidence>
<evidence type="ECO:0000305" key="2"/>
<sequence>MPSKGPLQSVQVFGRKKTATAVAHCKRGNGLIKVNGRPLEMIEPRTLQYKLLEPVLLLGKERFAGVDIRVRVKGGGHVAQIYAIRQSISKALVAYYQKYVDEASKKEIKDILIQYDRTLLVADPRRCESKKFGGPGARARYQKSYR</sequence>